<organism>
    <name type="scientific">Pseudomonas aeruginosa (strain UCBPP-PA14)</name>
    <dbReference type="NCBI Taxonomy" id="208963"/>
    <lineage>
        <taxon>Bacteria</taxon>
        <taxon>Pseudomonadati</taxon>
        <taxon>Pseudomonadota</taxon>
        <taxon>Gammaproteobacteria</taxon>
        <taxon>Pseudomonadales</taxon>
        <taxon>Pseudomonadaceae</taxon>
        <taxon>Pseudomonas</taxon>
    </lineage>
</organism>
<reference key="1">
    <citation type="journal article" date="2006" name="Genome Biol.">
        <title>Genomic analysis reveals that Pseudomonas aeruginosa virulence is combinatorial.</title>
        <authorList>
            <person name="Lee D.G."/>
            <person name="Urbach J.M."/>
            <person name="Wu G."/>
            <person name="Liberati N.T."/>
            <person name="Feinbaum R.L."/>
            <person name="Miyata S."/>
            <person name="Diggins L.T."/>
            <person name="He J."/>
            <person name="Saucier M."/>
            <person name="Deziel E."/>
            <person name="Friedman L."/>
            <person name="Li L."/>
            <person name="Grills G."/>
            <person name="Montgomery K."/>
            <person name="Kucherlapati R."/>
            <person name="Rahme L.G."/>
            <person name="Ausubel F.M."/>
        </authorList>
    </citation>
    <scope>NUCLEOTIDE SEQUENCE [LARGE SCALE GENOMIC DNA]</scope>
    <source>
        <strain>UCBPP-PA14</strain>
    </source>
</reference>
<keyword id="KW-0030">Aminoacyl-tRNA synthetase</keyword>
<keyword id="KW-0067">ATP-binding</keyword>
<keyword id="KW-0963">Cytoplasm</keyword>
<keyword id="KW-0436">Ligase</keyword>
<keyword id="KW-0547">Nucleotide-binding</keyword>
<keyword id="KW-0648">Protein biosynthesis</keyword>
<name>SYH_PSEAB</name>
<protein>
    <recommendedName>
        <fullName evidence="1">Histidine--tRNA ligase</fullName>
        <ecNumber evidence="1">6.1.1.21</ecNumber>
    </recommendedName>
    <alternativeName>
        <fullName evidence="1">Histidyl-tRNA synthetase</fullName>
        <shortName evidence="1">HisRS</shortName>
    </alternativeName>
</protein>
<dbReference type="EC" id="6.1.1.21" evidence="1"/>
<dbReference type="EMBL" id="CP000438">
    <property type="protein sequence ID" value="ABJ13063.1"/>
    <property type="molecule type" value="Genomic_DNA"/>
</dbReference>
<dbReference type="RefSeq" id="WP_003092797.1">
    <property type="nucleotide sequence ID" value="NZ_CP034244.1"/>
</dbReference>
<dbReference type="SMR" id="Q02RV6"/>
<dbReference type="KEGG" id="pau:PA14_14890"/>
<dbReference type="PseudoCAP" id="PA14_14890"/>
<dbReference type="HOGENOM" id="CLU_025113_1_1_6"/>
<dbReference type="BioCyc" id="PAER208963:G1G74-1220-MONOMER"/>
<dbReference type="Proteomes" id="UP000000653">
    <property type="component" value="Chromosome"/>
</dbReference>
<dbReference type="GO" id="GO:0005737">
    <property type="term" value="C:cytoplasm"/>
    <property type="evidence" value="ECO:0007669"/>
    <property type="project" value="UniProtKB-SubCell"/>
</dbReference>
<dbReference type="GO" id="GO:0005524">
    <property type="term" value="F:ATP binding"/>
    <property type="evidence" value="ECO:0007669"/>
    <property type="project" value="UniProtKB-UniRule"/>
</dbReference>
<dbReference type="GO" id="GO:0004821">
    <property type="term" value="F:histidine-tRNA ligase activity"/>
    <property type="evidence" value="ECO:0007669"/>
    <property type="project" value="UniProtKB-UniRule"/>
</dbReference>
<dbReference type="GO" id="GO:0006427">
    <property type="term" value="P:histidyl-tRNA aminoacylation"/>
    <property type="evidence" value="ECO:0007669"/>
    <property type="project" value="UniProtKB-UniRule"/>
</dbReference>
<dbReference type="CDD" id="cd00773">
    <property type="entry name" value="HisRS-like_core"/>
    <property type="match status" value="1"/>
</dbReference>
<dbReference type="CDD" id="cd00859">
    <property type="entry name" value="HisRS_anticodon"/>
    <property type="match status" value="1"/>
</dbReference>
<dbReference type="FunFam" id="3.30.930.10:FF:000005">
    <property type="entry name" value="Histidine--tRNA ligase"/>
    <property type="match status" value="1"/>
</dbReference>
<dbReference type="Gene3D" id="3.40.50.800">
    <property type="entry name" value="Anticodon-binding domain"/>
    <property type="match status" value="1"/>
</dbReference>
<dbReference type="Gene3D" id="3.30.930.10">
    <property type="entry name" value="Bira Bifunctional Protein, Domain 2"/>
    <property type="match status" value="1"/>
</dbReference>
<dbReference type="HAMAP" id="MF_00127">
    <property type="entry name" value="His_tRNA_synth"/>
    <property type="match status" value="1"/>
</dbReference>
<dbReference type="InterPro" id="IPR006195">
    <property type="entry name" value="aa-tRNA-synth_II"/>
</dbReference>
<dbReference type="InterPro" id="IPR045864">
    <property type="entry name" value="aa-tRNA-synth_II/BPL/LPL"/>
</dbReference>
<dbReference type="InterPro" id="IPR004154">
    <property type="entry name" value="Anticodon-bd"/>
</dbReference>
<dbReference type="InterPro" id="IPR036621">
    <property type="entry name" value="Anticodon-bd_dom_sf"/>
</dbReference>
<dbReference type="InterPro" id="IPR015807">
    <property type="entry name" value="His-tRNA-ligase"/>
</dbReference>
<dbReference type="InterPro" id="IPR041715">
    <property type="entry name" value="HisRS-like_core"/>
</dbReference>
<dbReference type="InterPro" id="IPR004516">
    <property type="entry name" value="HisRS/HisZ"/>
</dbReference>
<dbReference type="InterPro" id="IPR033656">
    <property type="entry name" value="HisRS_anticodon"/>
</dbReference>
<dbReference type="NCBIfam" id="TIGR00442">
    <property type="entry name" value="hisS"/>
    <property type="match status" value="1"/>
</dbReference>
<dbReference type="PANTHER" id="PTHR43707:SF1">
    <property type="entry name" value="HISTIDINE--TRNA LIGASE, MITOCHONDRIAL-RELATED"/>
    <property type="match status" value="1"/>
</dbReference>
<dbReference type="PANTHER" id="PTHR43707">
    <property type="entry name" value="HISTIDYL-TRNA SYNTHETASE"/>
    <property type="match status" value="1"/>
</dbReference>
<dbReference type="Pfam" id="PF03129">
    <property type="entry name" value="HGTP_anticodon"/>
    <property type="match status" value="1"/>
</dbReference>
<dbReference type="Pfam" id="PF13393">
    <property type="entry name" value="tRNA-synt_His"/>
    <property type="match status" value="1"/>
</dbReference>
<dbReference type="PIRSF" id="PIRSF001549">
    <property type="entry name" value="His-tRNA_synth"/>
    <property type="match status" value="1"/>
</dbReference>
<dbReference type="SUPFAM" id="SSF52954">
    <property type="entry name" value="Class II aaRS ABD-related"/>
    <property type="match status" value="1"/>
</dbReference>
<dbReference type="SUPFAM" id="SSF55681">
    <property type="entry name" value="Class II aaRS and biotin synthetases"/>
    <property type="match status" value="1"/>
</dbReference>
<dbReference type="PROSITE" id="PS50862">
    <property type="entry name" value="AA_TRNA_LIGASE_II"/>
    <property type="match status" value="1"/>
</dbReference>
<comment type="catalytic activity">
    <reaction evidence="1">
        <text>tRNA(His) + L-histidine + ATP = L-histidyl-tRNA(His) + AMP + diphosphate + H(+)</text>
        <dbReference type="Rhea" id="RHEA:17313"/>
        <dbReference type="Rhea" id="RHEA-COMP:9665"/>
        <dbReference type="Rhea" id="RHEA-COMP:9689"/>
        <dbReference type="ChEBI" id="CHEBI:15378"/>
        <dbReference type="ChEBI" id="CHEBI:30616"/>
        <dbReference type="ChEBI" id="CHEBI:33019"/>
        <dbReference type="ChEBI" id="CHEBI:57595"/>
        <dbReference type="ChEBI" id="CHEBI:78442"/>
        <dbReference type="ChEBI" id="CHEBI:78527"/>
        <dbReference type="ChEBI" id="CHEBI:456215"/>
        <dbReference type="EC" id="6.1.1.21"/>
    </reaction>
</comment>
<comment type="subunit">
    <text evidence="1">Homodimer.</text>
</comment>
<comment type="subcellular location">
    <subcellularLocation>
        <location evidence="1">Cytoplasm</location>
    </subcellularLocation>
</comment>
<comment type="similarity">
    <text evidence="1">Belongs to the class-II aminoacyl-tRNA synthetase family.</text>
</comment>
<evidence type="ECO:0000255" key="1">
    <source>
        <dbReference type="HAMAP-Rule" id="MF_00127"/>
    </source>
</evidence>
<accession>Q02RV6</accession>
<gene>
    <name evidence="1" type="primary">hisS</name>
    <name type="ordered locus">PA14_14890</name>
</gene>
<proteinExistence type="inferred from homology"/>
<sequence>MSKSLQAIRGMNDILPEQTPAWRYLERTFAGLLDGYGYSEIRLPILEFTELFARGIGEGTDVVDKEMYTFLDRNGESLTMRPEGTAGCVRAVLEHGLSGGGQVQKLWYTGPMFRYEKPQKGRYRQFHQIGVEVFNLPGPDIDAELIILTWRLWQKLGMADAVTLQLNTLGSSEARARYREALVAYLQERFEQLDEDSQRRMTTNPLRILDSKVESTQALLVGAPTLHDYLDEESIAHFEGLKARLDAVGLRYEINQKLVRGLDYYCRTAFEWVTDKLGAQGTVCGGGRYDGLVSQFGGKPTPGVGFAMGVERLVLLLETLGVIPAELNRPADLYVCAFGEPAELAALTLAEQLRSAIPGIRLLVNAGAGSFKSQFKKADKSGARFALILGEDEVANRVVGFKPLRDEGEQQSIAWDALPEHLAACLAQA</sequence>
<feature type="chain" id="PRO_1000016418" description="Histidine--tRNA ligase">
    <location>
        <begin position="1"/>
        <end position="429"/>
    </location>
</feature>